<feature type="chain" id="PRO_0000360747" description="Putative phosphohydrolase YueE">
    <location>
        <begin position="1"/>
        <end position="176"/>
    </location>
</feature>
<feature type="domain" description="HD" evidence="1">
    <location>
        <begin position="23"/>
        <end position="139"/>
    </location>
</feature>
<sequence length="176" mass="20022">MRKVTLMDVFTHPIAQKYLQRSGVAHAIACAYHAYRLSVKADINPDLAAKAALLHDIGHYEWYTDGKWDYEKYKRNDIHAIKGAERAHKLLIRLGEEPKAAKEIALAILLHTDSYLPEGELDKNTLQQIVKKADELDEEPGGHHHYRQIDPSTARKKIEKLDQLIDQAQASVIKPV</sequence>
<accession>O32098</accession>
<reference key="1">
    <citation type="journal article" date="1997" name="Nature">
        <title>The complete genome sequence of the Gram-positive bacterium Bacillus subtilis.</title>
        <authorList>
            <person name="Kunst F."/>
            <person name="Ogasawara N."/>
            <person name="Moszer I."/>
            <person name="Albertini A.M."/>
            <person name="Alloni G."/>
            <person name="Azevedo V."/>
            <person name="Bertero M.G."/>
            <person name="Bessieres P."/>
            <person name="Bolotin A."/>
            <person name="Borchert S."/>
            <person name="Borriss R."/>
            <person name="Boursier L."/>
            <person name="Brans A."/>
            <person name="Braun M."/>
            <person name="Brignell S.C."/>
            <person name="Bron S."/>
            <person name="Brouillet S."/>
            <person name="Bruschi C.V."/>
            <person name="Caldwell B."/>
            <person name="Capuano V."/>
            <person name="Carter N.M."/>
            <person name="Choi S.-K."/>
            <person name="Codani J.-J."/>
            <person name="Connerton I.F."/>
            <person name="Cummings N.J."/>
            <person name="Daniel R.A."/>
            <person name="Denizot F."/>
            <person name="Devine K.M."/>
            <person name="Duesterhoeft A."/>
            <person name="Ehrlich S.D."/>
            <person name="Emmerson P.T."/>
            <person name="Entian K.-D."/>
            <person name="Errington J."/>
            <person name="Fabret C."/>
            <person name="Ferrari E."/>
            <person name="Foulger D."/>
            <person name="Fritz C."/>
            <person name="Fujita M."/>
            <person name="Fujita Y."/>
            <person name="Fuma S."/>
            <person name="Galizzi A."/>
            <person name="Galleron N."/>
            <person name="Ghim S.-Y."/>
            <person name="Glaser P."/>
            <person name="Goffeau A."/>
            <person name="Golightly E.J."/>
            <person name="Grandi G."/>
            <person name="Guiseppi G."/>
            <person name="Guy B.J."/>
            <person name="Haga K."/>
            <person name="Haiech J."/>
            <person name="Harwood C.R."/>
            <person name="Henaut A."/>
            <person name="Hilbert H."/>
            <person name="Holsappel S."/>
            <person name="Hosono S."/>
            <person name="Hullo M.-F."/>
            <person name="Itaya M."/>
            <person name="Jones L.-M."/>
            <person name="Joris B."/>
            <person name="Karamata D."/>
            <person name="Kasahara Y."/>
            <person name="Klaerr-Blanchard M."/>
            <person name="Klein C."/>
            <person name="Kobayashi Y."/>
            <person name="Koetter P."/>
            <person name="Koningstein G."/>
            <person name="Krogh S."/>
            <person name="Kumano M."/>
            <person name="Kurita K."/>
            <person name="Lapidus A."/>
            <person name="Lardinois S."/>
            <person name="Lauber J."/>
            <person name="Lazarevic V."/>
            <person name="Lee S.-M."/>
            <person name="Levine A."/>
            <person name="Liu H."/>
            <person name="Masuda S."/>
            <person name="Mauel C."/>
            <person name="Medigue C."/>
            <person name="Medina N."/>
            <person name="Mellado R.P."/>
            <person name="Mizuno M."/>
            <person name="Moestl D."/>
            <person name="Nakai S."/>
            <person name="Noback M."/>
            <person name="Noone D."/>
            <person name="O'Reilly M."/>
            <person name="Ogawa K."/>
            <person name="Ogiwara A."/>
            <person name="Oudega B."/>
            <person name="Park S.-H."/>
            <person name="Parro V."/>
            <person name="Pohl T.M."/>
            <person name="Portetelle D."/>
            <person name="Porwollik S."/>
            <person name="Prescott A.M."/>
            <person name="Presecan E."/>
            <person name="Pujic P."/>
            <person name="Purnelle B."/>
            <person name="Rapoport G."/>
            <person name="Rey M."/>
            <person name="Reynolds S."/>
            <person name="Rieger M."/>
            <person name="Rivolta C."/>
            <person name="Rocha E."/>
            <person name="Roche B."/>
            <person name="Rose M."/>
            <person name="Sadaie Y."/>
            <person name="Sato T."/>
            <person name="Scanlan E."/>
            <person name="Schleich S."/>
            <person name="Schroeter R."/>
            <person name="Scoffone F."/>
            <person name="Sekiguchi J."/>
            <person name="Sekowska A."/>
            <person name="Seror S.J."/>
            <person name="Serror P."/>
            <person name="Shin B.-S."/>
            <person name="Soldo B."/>
            <person name="Sorokin A."/>
            <person name="Tacconi E."/>
            <person name="Takagi T."/>
            <person name="Takahashi H."/>
            <person name="Takemaru K."/>
            <person name="Takeuchi M."/>
            <person name="Tamakoshi A."/>
            <person name="Tanaka T."/>
            <person name="Terpstra P."/>
            <person name="Tognoni A."/>
            <person name="Tosato V."/>
            <person name="Uchiyama S."/>
            <person name="Vandenbol M."/>
            <person name="Vannier F."/>
            <person name="Vassarotti A."/>
            <person name="Viari A."/>
            <person name="Wambutt R."/>
            <person name="Wedler E."/>
            <person name="Wedler H."/>
            <person name="Weitzenegger T."/>
            <person name="Winters P."/>
            <person name="Wipat A."/>
            <person name="Yamamoto H."/>
            <person name="Yamane K."/>
            <person name="Yasumoto K."/>
            <person name="Yata K."/>
            <person name="Yoshida K."/>
            <person name="Yoshikawa H.-F."/>
            <person name="Zumstein E."/>
            <person name="Yoshikawa H."/>
            <person name="Danchin A."/>
        </authorList>
    </citation>
    <scope>NUCLEOTIDE SEQUENCE [LARGE SCALE GENOMIC DNA]</scope>
    <source>
        <strain>168</strain>
    </source>
</reference>
<organism>
    <name type="scientific">Bacillus subtilis (strain 168)</name>
    <dbReference type="NCBI Taxonomy" id="224308"/>
    <lineage>
        <taxon>Bacteria</taxon>
        <taxon>Bacillati</taxon>
        <taxon>Bacillota</taxon>
        <taxon>Bacilli</taxon>
        <taxon>Bacillales</taxon>
        <taxon>Bacillaceae</taxon>
        <taxon>Bacillus</taxon>
    </lineage>
</organism>
<evidence type="ECO:0000255" key="1">
    <source>
        <dbReference type="PROSITE-ProRule" id="PRU01175"/>
    </source>
</evidence>
<keyword id="KW-0378">Hydrolase</keyword>
<keyword id="KW-1185">Reference proteome</keyword>
<dbReference type="EC" id="3.-.-.-"/>
<dbReference type="EMBL" id="AL009126">
    <property type="protein sequence ID" value="CAB15171.1"/>
    <property type="molecule type" value="Genomic_DNA"/>
</dbReference>
<dbReference type="PIR" id="F70007">
    <property type="entry name" value="F70007"/>
</dbReference>
<dbReference type="RefSeq" id="NP_391061.1">
    <property type="nucleotide sequence ID" value="NC_000964.3"/>
</dbReference>
<dbReference type="RefSeq" id="WP_003244444.1">
    <property type="nucleotide sequence ID" value="NZ_OZ025638.1"/>
</dbReference>
<dbReference type="SMR" id="O32098"/>
<dbReference type="FunCoup" id="O32098">
    <property type="interactions" value="38"/>
</dbReference>
<dbReference type="STRING" id="224308.BSU31830"/>
<dbReference type="PaxDb" id="224308-BSU31830"/>
<dbReference type="DNASU" id="936545"/>
<dbReference type="EnsemblBacteria" id="CAB15171">
    <property type="protein sequence ID" value="CAB15171"/>
    <property type="gene ID" value="BSU_31830"/>
</dbReference>
<dbReference type="GeneID" id="936545"/>
<dbReference type="KEGG" id="bsu:BSU31830"/>
<dbReference type="PATRIC" id="fig|224308.179.peg.3449"/>
<dbReference type="eggNOG" id="COG1418">
    <property type="taxonomic scope" value="Bacteria"/>
</dbReference>
<dbReference type="InParanoid" id="O32098"/>
<dbReference type="OrthoDB" id="2352233at2"/>
<dbReference type="BioCyc" id="BSUB:BSU31830-MONOMER"/>
<dbReference type="Proteomes" id="UP000001570">
    <property type="component" value="Chromosome"/>
</dbReference>
<dbReference type="GO" id="GO:0016787">
    <property type="term" value="F:hydrolase activity"/>
    <property type="evidence" value="ECO:0007669"/>
    <property type="project" value="UniProtKB-KW"/>
</dbReference>
<dbReference type="CDD" id="cd00077">
    <property type="entry name" value="HDc"/>
    <property type="match status" value="1"/>
</dbReference>
<dbReference type="Gene3D" id="1.10.3210.10">
    <property type="entry name" value="Hypothetical protein af1432"/>
    <property type="match status" value="1"/>
</dbReference>
<dbReference type="InterPro" id="IPR003607">
    <property type="entry name" value="HD/PDEase_dom"/>
</dbReference>
<dbReference type="InterPro" id="IPR006674">
    <property type="entry name" value="HD_domain"/>
</dbReference>
<dbReference type="InterPro" id="IPR006675">
    <property type="entry name" value="HDIG_dom"/>
</dbReference>
<dbReference type="NCBIfam" id="TIGR00277">
    <property type="entry name" value="HDIG"/>
    <property type="match status" value="1"/>
</dbReference>
<dbReference type="Pfam" id="PF01966">
    <property type="entry name" value="HD"/>
    <property type="match status" value="1"/>
</dbReference>
<dbReference type="SMART" id="SM00471">
    <property type="entry name" value="HDc"/>
    <property type="match status" value="1"/>
</dbReference>
<dbReference type="SUPFAM" id="SSF109604">
    <property type="entry name" value="HD-domain/PDEase-like"/>
    <property type="match status" value="1"/>
</dbReference>
<dbReference type="PROSITE" id="PS51831">
    <property type="entry name" value="HD"/>
    <property type="match status" value="1"/>
</dbReference>
<protein>
    <recommendedName>
        <fullName>Putative phosphohydrolase YueE</fullName>
        <ecNumber>3.-.-.-</ecNumber>
    </recommendedName>
</protein>
<gene>
    <name type="primary">yueE</name>
    <name type="ordered locus">BSU31830</name>
</gene>
<name>YUEE_BACSU</name>
<proteinExistence type="predicted"/>